<accession>B2TBS5</accession>
<organism>
    <name type="scientific">Paraburkholderia phytofirmans (strain DSM 17436 / LMG 22146 / PsJN)</name>
    <name type="common">Burkholderia phytofirmans</name>
    <dbReference type="NCBI Taxonomy" id="398527"/>
    <lineage>
        <taxon>Bacteria</taxon>
        <taxon>Pseudomonadati</taxon>
        <taxon>Pseudomonadota</taxon>
        <taxon>Betaproteobacteria</taxon>
        <taxon>Burkholderiales</taxon>
        <taxon>Burkholderiaceae</taxon>
        <taxon>Paraburkholderia</taxon>
    </lineage>
</organism>
<dbReference type="EC" id="2.1.1.195" evidence="1"/>
<dbReference type="EMBL" id="CP001053">
    <property type="protein sequence ID" value="ACD19726.1"/>
    <property type="molecule type" value="Genomic_DNA"/>
</dbReference>
<dbReference type="RefSeq" id="WP_012427234.1">
    <property type="nucleotide sequence ID" value="NC_010676.1"/>
</dbReference>
<dbReference type="SMR" id="B2TBS5"/>
<dbReference type="STRING" id="398527.Bphyt_5367"/>
<dbReference type="KEGG" id="bpy:Bphyt_5367"/>
<dbReference type="eggNOG" id="COG1903">
    <property type="taxonomic scope" value="Bacteria"/>
</dbReference>
<dbReference type="HOGENOM" id="CLU_041273_0_0_4"/>
<dbReference type="OrthoDB" id="6439987at2"/>
<dbReference type="UniPathway" id="UPA00148">
    <property type="reaction ID" value="UER00227"/>
</dbReference>
<dbReference type="Proteomes" id="UP000001739">
    <property type="component" value="Chromosome 2"/>
</dbReference>
<dbReference type="GO" id="GO:0043780">
    <property type="term" value="F:cobalt-precorrin-5B C1-methyltransferase activity"/>
    <property type="evidence" value="ECO:0007669"/>
    <property type="project" value="RHEA"/>
</dbReference>
<dbReference type="GO" id="GO:0019251">
    <property type="term" value="P:anaerobic cobalamin biosynthetic process"/>
    <property type="evidence" value="ECO:0007669"/>
    <property type="project" value="UniProtKB-UniRule"/>
</dbReference>
<dbReference type="GO" id="GO:0032259">
    <property type="term" value="P:methylation"/>
    <property type="evidence" value="ECO:0007669"/>
    <property type="project" value="UniProtKB-KW"/>
</dbReference>
<dbReference type="Gene3D" id="3.30.2110.10">
    <property type="entry name" value="CbiD-like"/>
    <property type="match status" value="1"/>
</dbReference>
<dbReference type="HAMAP" id="MF_00787">
    <property type="entry name" value="CbiD"/>
    <property type="match status" value="1"/>
</dbReference>
<dbReference type="InterPro" id="IPR002748">
    <property type="entry name" value="CbiD"/>
</dbReference>
<dbReference type="InterPro" id="IPR036074">
    <property type="entry name" value="CbiD_sf"/>
</dbReference>
<dbReference type="NCBIfam" id="TIGR00312">
    <property type="entry name" value="cbiD"/>
    <property type="match status" value="1"/>
</dbReference>
<dbReference type="NCBIfam" id="NF000849">
    <property type="entry name" value="PRK00075.1-1"/>
    <property type="match status" value="1"/>
</dbReference>
<dbReference type="PANTHER" id="PTHR35863">
    <property type="entry name" value="COBALT-PRECORRIN-5B C(1)-METHYLTRANSFERASE"/>
    <property type="match status" value="1"/>
</dbReference>
<dbReference type="PANTHER" id="PTHR35863:SF1">
    <property type="entry name" value="COBALT-PRECORRIN-5B C(1)-METHYLTRANSFERASE"/>
    <property type="match status" value="1"/>
</dbReference>
<dbReference type="Pfam" id="PF01888">
    <property type="entry name" value="CbiD"/>
    <property type="match status" value="1"/>
</dbReference>
<dbReference type="PIRSF" id="PIRSF026782">
    <property type="entry name" value="CbiD"/>
    <property type="match status" value="1"/>
</dbReference>
<dbReference type="SUPFAM" id="SSF111342">
    <property type="entry name" value="CbiD-like"/>
    <property type="match status" value="1"/>
</dbReference>
<evidence type="ECO:0000255" key="1">
    <source>
        <dbReference type="HAMAP-Rule" id="MF_00787"/>
    </source>
</evidence>
<protein>
    <recommendedName>
        <fullName evidence="1">Cobalt-precorrin-5B C(1)-methyltransferase</fullName>
        <ecNumber evidence="1">2.1.1.195</ecNumber>
    </recommendedName>
    <alternativeName>
        <fullName evidence="1">Cobalt-precorrin-6A synthase</fullName>
    </alternativeName>
</protein>
<sequence>MREETPEHPAPLRSGYTTGSCATATSLAAARLLLAGVVSEVAEILLPKGQHVPMPLVFCRLIGNGDEGAEAGTVKDAGDDPDVTHGAVVFARVRLVAEPGVIFRAGPGVGTVTRAGLTLPVGEPAINPVPRRMMTEHLAELAAEHAYGGGFEVTIGVEGGEALALKTMNPRLGILGGLSILGTTGIVRPFSCSAYIASIHQGIDVARANGYTHLAACTGNASEDAMRAHYGLPDIALIEMGDFVGAVLKHMKRAPVERLSVCGGFGKLSKLAAGHLDLHSRNSSIDLERLAQWAAEQGADDALQASIRAANTSQQAVALAHAQQVPLGDIVCRHALAVAREIVPPQVNVEMFAIDRRGLLIGAAQ</sequence>
<comment type="function">
    <text evidence="1">Catalyzes the methylation of C-1 in cobalt-precorrin-5B to form cobalt-precorrin-6A.</text>
</comment>
<comment type="catalytic activity">
    <reaction evidence="1">
        <text>Co-precorrin-5B + S-adenosyl-L-methionine = Co-precorrin-6A + S-adenosyl-L-homocysteine</text>
        <dbReference type="Rhea" id="RHEA:26285"/>
        <dbReference type="ChEBI" id="CHEBI:57856"/>
        <dbReference type="ChEBI" id="CHEBI:59789"/>
        <dbReference type="ChEBI" id="CHEBI:60063"/>
        <dbReference type="ChEBI" id="CHEBI:60064"/>
        <dbReference type="EC" id="2.1.1.195"/>
    </reaction>
</comment>
<comment type="pathway">
    <text evidence="1">Cofactor biosynthesis; adenosylcobalamin biosynthesis; cob(II)yrinate a,c-diamide from sirohydrochlorin (anaerobic route): step 6/10.</text>
</comment>
<comment type="similarity">
    <text evidence="1">Belongs to the CbiD family.</text>
</comment>
<proteinExistence type="inferred from homology"/>
<gene>
    <name evidence="1" type="primary">cbiD</name>
    <name type="ordered locus">Bphyt_5367</name>
</gene>
<keyword id="KW-0169">Cobalamin biosynthesis</keyword>
<keyword id="KW-0489">Methyltransferase</keyword>
<keyword id="KW-0949">S-adenosyl-L-methionine</keyword>
<keyword id="KW-0808">Transferase</keyword>
<feature type="chain" id="PRO_1000133732" description="Cobalt-precorrin-5B C(1)-methyltransferase">
    <location>
        <begin position="1"/>
        <end position="365"/>
    </location>
</feature>
<name>CBID_PARPJ</name>
<reference key="1">
    <citation type="journal article" date="2011" name="J. Bacteriol.">
        <title>Complete genome sequence of the plant growth-promoting endophyte Burkholderia phytofirmans strain PsJN.</title>
        <authorList>
            <person name="Weilharter A."/>
            <person name="Mitter B."/>
            <person name="Shin M.V."/>
            <person name="Chain P.S."/>
            <person name="Nowak J."/>
            <person name="Sessitsch A."/>
        </authorList>
    </citation>
    <scope>NUCLEOTIDE SEQUENCE [LARGE SCALE GENOMIC DNA]</scope>
    <source>
        <strain>DSM 17436 / LMG 22146 / PsJN</strain>
    </source>
</reference>